<evidence type="ECO:0000255" key="1">
    <source>
        <dbReference type="HAMAP-Rule" id="MF_02113"/>
    </source>
</evidence>
<accession>C6A2V9</accession>
<comment type="function">
    <text evidence="1">Component of the proteasome core, a large protease complex with broad specificity involved in protein degradation.</text>
</comment>
<comment type="catalytic activity">
    <reaction evidence="1">
        <text>Cleavage of peptide bonds with very broad specificity.</text>
        <dbReference type="EC" id="3.4.25.1"/>
    </reaction>
</comment>
<comment type="activity regulation">
    <text evidence="1">The formation of the proteasomal ATPase PAN-20S proteasome complex, via the docking of the C-termini of PAN into the intersubunit pockets in the alpha-rings, triggers opening of the gate for substrate entry. Interconversion between the open-gate and close-gate conformations leads to a dynamic regulation of the 20S proteasome proteolysis activity.</text>
</comment>
<comment type="subunit">
    <text evidence="1">The 20S proteasome core is composed of 14 alpha and 14 beta subunits that assemble into four stacked heptameric rings, resulting in a barrel-shaped structure. The two inner rings, each composed of seven catalytic beta subunits, are sandwiched by two outer rings, each composed of seven alpha subunits. The catalytic chamber with the active sites is on the inside of the barrel. Has a gated structure, the ends of the cylinder being occluded by the N-termini of the alpha-subunits. Is capped at one or both ends by the proteasome regulatory ATPase, PAN.</text>
</comment>
<comment type="subcellular location">
    <subcellularLocation>
        <location evidence="1">Cytoplasm</location>
    </subcellularLocation>
</comment>
<comment type="similarity">
    <text evidence="1">Belongs to the peptidase T1B family.</text>
</comment>
<feature type="propeptide" id="PRO_0000397472" description="Removed in mature form; by autocatalysis" evidence="1">
    <location>
        <begin position="1"/>
        <end position="9"/>
    </location>
</feature>
<feature type="chain" id="PRO_0000397473" description="Proteasome subunit beta 1">
    <location>
        <begin position="10"/>
        <end position="207"/>
    </location>
</feature>
<feature type="active site" description="Nucleophile" evidence="1">
    <location>
        <position position="10"/>
    </location>
</feature>
<proteinExistence type="inferred from homology"/>
<reference key="1">
    <citation type="journal article" date="2009" name="Appl. Environ. Microbiol.">
        <title>Metabolic versatility and indigenous origin of the archaeon Thermococcus sibiricus, isolated from a siberian oil reservoir, as revealed by genome analysis.</title>
        <authorList>
            <person name="Mardanov A.V."/>
            <person name="Ravin N.V."/>
            <person name="Svetlitchnyi V.A."/>
            <person name="Beletsky A.V."/>
            <person name="Miroshnichenko M.L."/>
            <person name="Bonch-Osmolovskaya E.A."/>
            <person name="Skryabin K.G."/>
        </authorList>
    </citation>
    <scope>NUCLEOTIDE SEQUENCE [LARGE SCALE GENOMIC DNA]</scope>
    <source>
        <strain>DSM 12597 / MM 739</strain>
    </source>
</reference>
<gene>
    <name evidence="1" type="primary">psmB1</name>
    <name type="ordered locus">TSIB_0896</name>
</gene>
<protein>
    <recommendedName>
        <fullName evidence="1">Proteasome subunit beta 1</fullName>
        <ecNumber evidence="1">3.4.25.1</ecNumber>
    </recommendedName>
    <alternativeName>
        <fullName evidence="1">20S proteasome beta subunit 1</fullName>
    </alternativeName>
    <alternativeName>
        <fullName evidence="1">Proteasome core protein PsmB 1</fullName>
    </alternativeName>
</protein>
<sequence>MWALDKIKGTTTVGIVCKDGVVLTADRRASLGNMVISKGVTKIFQVDDHLALAGAGAVGDILSLVRALRAESKLYRAKVGKEMSTKALATLTSNILSGRKYLPYFGWFLIGGYDEKPSLYSIDMAGGITEDKYVSAGSGMEFAYSILDNEYSEKITLNNGVKLAIKAINAAIKRDVFTGDGIMVVTIDREGYRELSKEEVEKLLKKL</sequence>
<keyword id="KW-0068">Autocatalytic cleavage</keyword>
<keyword id="KW-0963">Cytoplasm</keyword>
<keyword id="KW-0378">Hydrolase</keyword>
<keyword id="KW-0645">Protease</keyword>
<keyword id="KW-0647">Proteasome</keyword>
<keyword id="KW-1185">Reference proteome</keyword>
<keyword id="KW-0888">Threonine protease</keyword>
<keyword id="KW-0865">Zymogen</keyword>
<organism>
    <name type="scientific">Thermococcus sibiricus (strain DSM 12597 / MM 739)</name>
    <dbReference type="NCBI Taxonomy" id="604354"/>
    <lineage>
        <taxon>Archaea</taxon>
        <taxon>Methanobacteriati</taxon>
        <taxon>Methanobacteriota</taxon>
        <taxon>Thermococci</taxon>
        <taxon>Thermococcales</taxon>
        <taxon>Thermococcaceae</taxon>
        <taxon>Thermococcus</taxon>
    </lineage>
</organism>
<dbReference type="EC" id="3.4.25.1" evidence="1"/>
<dbReference type="EMBL" id="CP001463">
    <property type="protein sequence ID" value="ACS89954.1"/>
    <property type="molecule type" value="Genomic_DNA"/>
</dbReference>
<dbReference type="RefSeq" id="WP_015849173.1">
    <property type="nucleotide sequence ID" value="NC_012883.1"/>
</dbReference>
<dbReference type="SMR" id="C6A2V9"/>
<dbReference type="STRING" id="604354.TSIB_0896"/>
<dbReference type="MEROPS" id="T01.002"/>
<dbReference type="GeneID" id="8095889"/>
<dbReference type="KEGG" id="tsi:TSIB_0896"/>
<dbReference type="eggNOG" id="arCOG00970">
    <property type="taxonomic scope" value="Archaea"/>
</dbReference>
<dbReference type="HOGENOM" id="CLU_035750_7_2_2"/>
<dbReference type="OrthoDB" id="6330at2157"/>
<dbReference type="Proteomes" id="UP000009079">
    <property type="component" value="Chromosome"/>
</dbReference>
<dbReference type="GO" id="GO:0005737">
    <property type="term" value="C:cytoplasm"/>
    <property type="evidence" value="ECO:0007669"/>
    <property type="project" value="UniProtKB-SubCell"/>
</dbReference>
<dbReference type="GO" id="GO:0019774">
    <property type="term" value="C:proteasome core complex, beta-subunit complex"/>
    <property type="evidence" value="ECO:0007669"/>
    <property type="project" value="UniProtKB-UniRule"/>
</dbReference>
<dbReference type="GO" id="GO:0004298">
    <property type="term" value="F:threonine-type endopeptidase activity"/>
    <property type="evidence" value="ECO:0007669"/>
    <property type="project" value="UniProtKB-UniRule"/>
</dbReference>
<dbReference type="GO" id="GO:0010498">
    <property type="term" value="P:proteasomal protein catabolic process"/>
    <property type="evidence" value="ECO:0007669"/>
    <property type="project" value="UniProtKB-UniRule"/>
</dbReference>
<dbReference type="FunFam" id="3.60.20.10:FF:000049">
    <property type="entry name" value="Proteasome subunit beta"/>
    <property type="match status" value="1"/>
</dbReference>
<dbReference type="Gene3D" id="3.60.20.10">
    <property type="entry name" value="Glutamine Phosphoribosylpyrophosphate, subunit 1, domain 1"/>
    <property type="match status" value="1"/>
</dbReference>
<dbReference type="HAMAP" id="MF_02113_A">
    <property type="entry name" value="Proteasome_B_A"/>
    <property type="match status" value="1"/>
</dbReference>
<dbReference type="InterPro" id="IPR029055">
    <property type="entry name" value="Ntn_hydrolases_N"/>
</dbReference>
<dbReference type="InterPro" id="IPR019983">
    <property type="entry name" value="Pept_T1A_Psome_bsu_arc"/>
</dbReference>
<dbReference type="InterPro" id="IPR000243">
    <property type="entry name" value="Pept_T1A_subB"/>
</dbReference>
<dbReference type="InterPro" id="IPR001353">
    <property type="entry name" value="Proteasome_sua/b"/>
</dbReference>
<dbReference type="InterPro" id="IPR023333">
    <property type="entry name" value="Proteasome_suB-type"/>
</dbReference>
<dbReference type="NCBIfam" id="TIGR03634">
    <property type="entry name" value="arc_protsome_B"/>
    <property type="match status" value="1"/>
</dbReference>
<dbReference type="PANTHER" id="PTHR32194:SF0">
    <property type="entry name" value="ATP-DEPENDENT PROTEASE SUBUNIT HSLV"/>
    <property type="match status" value="1"/>
</dbReference>
<dbReference type="PANTHER" id="PTHR32194">
    <property type="entry name" value="METALLOPROTEASE TLDD"/>
    <property type="match status" value="1"/>
</dbReference>
<dbReference type="Pfam" id="PF00227">
    <property type="entry name" value="Proteasome"/>
    <property type="match status" value="1"/>
</dbReference>
<dbReference type="PRINTS" id="PR00141">
    <property type="entry name" value="PROTEASOME"/>
</dbReference>
<dbReference type="SUPFAM" id="SSF56235">
    <property type="entry name" value="N-terminal nucleophile aminohydrolases (Ntn hydrolases)"/>
    <property type="match status" value="1"/>
</dbReference>
<dbReference type="PROSITE" id="PS51476">
    <property type="entry name" value="PROTEASOME_BETA_2"/>
    <property type="match status" value="1"/>
</dbReference>
<name>PSB1_THESM</name>